<gene>
    <name evidence="1" type="primary">fabR</name>
    <name type="ordered locus">YPN_0054</name>
    <name type="ORF">YP516_4592</name>
</gene>
<keyword id="KW-0963">Cytoplasm</keyword>
<keyword id="KW-0238">DNA-binding</keyword>
<keyword id="KW-0275">Fatty acid biosynthesis</keyword>
<keyword id="KW-0276">Fatty acid metabolism</keyword>
<keyword id="KW-0444">Lipid biosynthesis</keyword>
<keyword id="KW-0443">Lipid metabolism</keyword>
<keyword id="KW-0678">Repressor</keyword>
<keyword id="KW-0804">Transcription</keyword>
<keyword id="KW-0805">Transcription regulation</keyword>
<reference key="1">
    <citation type="journal article" date="2006" name="J. Bacteriol.">
        <title>Complete genome sequence of Yersinia pestis strains Antiqua and Nepal516: evidence of gene reduction in an emerging pathogen.</title>
        <authorList>
            <person name="Chain P.S.G."/>
            <person name="Hu P."/>
            <person name="Malfatti S.A."/>
            <person name="Radnedge L."/>
            <person name="Larimer F."/>
            <person name="Vergez L.M."/>
            <person name="Worsham P."/>
            <person name="Chu M.C."/>
            <person name="Andersen G.L."/>
        </authorList>
    </citation>
    <scope>NUCLEOTIDE SEQUENCE [LARGE SCALE GENOMIC DNA]</scope>
    <source>
        <strain>Nepal516</strain>
    </source>
</reference>
<reference key="2">
    <citation type="submission" date="2009-04" db="EMBL/GenBank/DDBJ databases">
        <title>Yersinia pestis Nepal516A whole genome shotgun sequencing project.</title>
        <authorList>
            <person name="Plunkett G. III"/>
            <person name="Anderson B.D."/>
            <person name="Baumler D.J."/>
            <person name="Burland V."/>
            <person name="Cabot E.L."/>
            <person name="Glasner J.D."/>
            <person name="Mau B."/>
            <person name="Neeno-Eckwall E."/>
            <person name="Perna N.T."/>
            <person name="Munk A.C."/>
            <person name="Tapia R."/>
            <person name="Green L.D."/>
            <person name="Rogers Y.C."/>
            <person name="Detter J.C."/>
            <person name="Bruce D.C."/>
            <person name="Brettin T.S."/>
        </authorList>
    </citation>
    <scope>NUCLEOTIDE SEQUENCE [LARGE SCALE GENOMIC DNA]</scope>
    <source>
        <strain>Nepal516</strain>
    </source>
</reference>
<comment type="function">
    <text evidence="1">Represses the transcription of fabB, involved in unsaturated fatty acid (UFA) biosynthesis. By controlling UFA production, FabR directly influences the physical properties of the membrane bilayer.</text>
</comment>
<comment type="subunit">
    <text evidence="1">Homodimer.</text>
</comment>
<comment type="subcellular location">
    <subcellularLocation>
        <location evidence="1">Cytoplasm</location>
    </subcellularLocation>
</comment>
<sequence length="211" mass="24167">MGVRAQQKERTRRSLIEAAFSQLSAERSFASLSLREVSREAGIAPTSFYRHFRDVDELGLTMVDESGLMLRQLMRQARQRIAKGGSVIRTSVSTFMEFIGNNPNAFRLLLRERSGTSAAFRAAVAREIQHFIAELADYLELENHMPRSFTEAQAEAMVTIVFSAGAEVLDVDIEQRRQLEERLVLQLRMISKGAYYWYRREQEKLAASRVE</sequence>
<proteinExistence type="inferred from homology"/>
<name>FABR_YERPN</name>
<feature type="chain" id="PRO_0000293581" description="HTH-type transcriptional repressor FabR">
    <location>
        <begin position="1"/>
        <end position="211"/>
    </location>
</feature>
<feature type="domain" description="HTH tetR-type" evidence="1">
    <location>
        <begin position="10"/>
        <end position="70"/>
    </location>
</feature>
<feature type="DNA-binding region" description="H-T-H motif" evidence="1">
    <location>
        <begin position="33"/>
        <end position="52"/>
    </location>
</feature>
<accession>Q1CNP3</accession>
<accession>D1Q372</accession>
<evidence type="ECO:0000255" key="1">
    <source>
        <dbReference type="HAMAP-Rule" id="MF_01190"/>
    </source>
</evidence>
<dbReference type="EMBL" id="CP000305">
    <property type="protein sequence ID" value="ABG16387.1"/>
    <property type="molecule type" value="Genomic_DNA"/>
</dbReference>
<dbReference type="EMBL" id="ACNQ01000019">
    <property type="protein sequence ID" value="EEO74975.1"/>
    <property type="molecule type" value="Genomic_DNA"/>
</dbReference>
<dbReference type="RefSeq" id="WP_002209476.1">
    <property type="nucleotide sequence ID" value="NZ_ACNQ01000019.1"/>
</dbReference>
<dbReference type="SMR" id="Q1CNP3"/>
<dbReference type="GeneID" id="96663601"/>
<dbReference type="KEGG" id="ypn:YPN_0054"/>
<dbReference type="HOGENOM" id="CLU_081861_0_0_6"/>
<dbReference type="Proteomes" id="UP000008936">
    <property type="component" value="Chromosome"/>
</dbReference>
<dbReference type="GO" id="GO:0005737">
    <property type="term" value="C:cytoplasm"/>
    <property type="evidence" value="ECO:0007669"/>
    <property type="project" value="UniProtKB-SubCell"/>
</dbReference>
<dbReference type="GO" id="GO:0003677">
    <property type="term" value="F:DNA binding"/>
    <property type="evidence" value="ECO:0007669"/>
    <property type="project" value="UniProtKB-KW"/>
</dbReference>
<dbReference type="GO" id="GO:0003700">
    <property type="term" value="F:DNA-binding transcription factor activity"/>
    <property type="evidence" value="ECO:0007669"/>
    <property type="project" value="UniProtKB-UniRule"/>
</dbReference>
<dbReference type="GO" id="GO:0006633">
    <property type="term" value="P:fatty acid biosynthetic process"/>
    <property type="evidence" value="ECO:0007669"/>
    <property type="project" value="UniProtKB-UniRule"/>
</dbReference>
<dbReference type="GO" id="GO:0045717">
    <property type="term" value="P:negative regulation of fatty acid biosynthetic process"/>
    <property type="evidence" value="ECO:0007669"/>
    <property type="project" value="UniProtKB-UniRule"/>
</dbReference>
<dbReference type="FunFam" id="1.10.10.60:FF:000034">
    <property type="entry name" value="HTH-type transcriptional repressor FabR"/>
    <property type="match status" value="1"/>
</dbReference>
<dbReference type="FunFam" id="1.10.357.10:FF:000001">
    <property type="entry name" value="HTH-type transcriptional repressor FabR"/>
    <property type="match status" value="1"/>
</dbReference>
<dbReference type="Gene3D" id="1.10.10.60">
    <property type="entry name" value="Homeodomain-like"/>
    <property type="match status" value="1"/>
</dbReference>
<dbReference type="Gene3D" id="1.10.357.10">
    <property type="entry name" value="Tetracycline Repressor, domain 2"/>
    <property type="match status" value="1"/>
</dbReference>
<dbReference type="HAMAP" id="MF_01190">
    <property type="entry name" value="HTH_type_FabR"/>
    <property type="match status" value="1"/>
</dbReference>
<dbReference type="InterPro" id="IPR054129">
    <property type="entry name" value="DesT_TetR_C"/>
</dbReference>
<dbReference type="InterPro" id="IPR009057">
    <property type="entry name" value="Homeodomain-like_sf"/>
</dbReference>
<dbReference type="InterPro" id="IPR001647">
    <property type="entry name" value="HTH_TetR"/>
</dbReference>
<dbReference type="InterPro" id="IPR050692">
    <property type="entry name" value="HTH_transcr_repressor_FabR"/>
</dbReference>
<dbReference type="InterPro" id="IPR023764">
    <property type="entry name" value="Tscrpt_reg_HTH_FabR"/>
</dbReference>
<dbReference type="NCBIfam" id="NF008402">
    <property type="entry name" value="PRK11202.1"/>
    <property type="match status" value="1"/>
</dbReference>
<dbReference type="PANTHER" id="PTHR47752">
    <property type="entry name" value="HTH-TYPE TRANSCRIPTIONAL REPRESSOR FABR"/>
    <property type="match status" value="1"/>
</dbReference>
<dbReference type="PANTHER" id="PTHR47752:SF1">
    <property type="entry name" value="HTH-TYPE TRANSCRIPTIONAL REPRESSOR FABR"/>
    <property type="match status" value="1"/>
</dbReference>
<dbReference type="Pfam" id="PF21943">
    <property type="entry name" value="TetR_C_46"/>
    <property type="match status" value="1"/>
</dbReference>
<dbReference type="Pfam" id="PF00440">
    <property type="entry name" value="TetR_N"/>
    <property type="match status" value="1"/>
</dbReference>
<dbReference type="SUPFAM" id="SSF46689">
    <property type="entry name" value="Homeodomain-like"/>
    <property type="match status" value="1"/>
</dbReference>
<dbReference type="PROSITE" id="PS50977">
    <property type="entry name" value="HTH_TETR_2"/>
    <property type="match status" value="1"/>
</dbReference>
<organism>
    <name type="scientific">Yersinia pestis bv. Antiqua (strain Nepal516)</name>
    <dbReference type="NCBI Taxonomy" id="377628"/>
    <lineage>
        <taxon>Bacteria</taxon>
        <taxon>Pseudomonadati</taxon>
        <taxon>Pseudomonadota</taxon>
        <taxon>Gammaproteobacteria</taxon>
        <taxon>Enterobacterales</taxon>
        <taxon>Yersiniaceae</taxon>
        <taxon>Yersinia</taxon>
    </lineage>
</organism>
<protein>
    <recommendedName>
        <fullName evidence="1">HTH-type transcriptional repressor FabR</fullName>
    </recommendedName>
</protein>